<keyword id="KW-0256">Endoplasmic reticulum</keyword>
<keyword id="KW-0325">Glycoprotein</keyword>
<keyword id="KW-0378">Hydrolase</keyword>
<keyword id="KW-0472">Membrane</keyword>
<keyword id="KW-0653">Protein transport</keyword>
<keyword id="KW-1185">Reference proteome</keyword>
<keyword id="KW-0812">Transmembrane</keyword>
<keyword id="KW-1133">Transmembrane helix</keyword>
<keyword id="KW-0813">Transport</keyword>
<sequence>MHRRSSGSPVEDDAEDSPLVSRSPTESTAHGPNNNAFETAEKSRSQIAKRGTSFDLRRDNGASTPRSRNSGLWRTPSSSSTSSTTAMATASTETKSSSASFLMPLASQRLPMGTSPESSRFRSSRLRSPWTCSILTALTTLVASVFLFFIVRSFSARQAGEDGCGIPVMSPTFLHMVGFDTEHTRFASKYNLYLYREEGVDFYNQENLGLNGAPVLFLPGNAGSYRQVRSLAAEASRHFHDVVRHDQERIKAGTRSLDFFMIDFNEDMAAFHGQTLLDQAEYVNEAIAYILSLYHDPKRSRRDPELPDPSSVILIGHSMGGIVARTALTMSNYQANSVNTIVTMSAPHAKPPVSFDSDIVHTYKQINDYWREAYSQTWANNNPLWHVTLISIAGGSRDTVVPSDYASISSLVPETHGFTVFTSSIPDVWIGVDHLSITWCDQFRKAIIKSLFDIIDVRRASQTKPRAERMRIFKKWYLTGLEPVAERTLSQKEPNTLLTLEDKSNSILPQGQRLILRELGHRSGPKVYLLPVPPQGVSGKKFTLLTDQRFDKTGEHGNLEVLFCSVFPLQNGKFATVFSMNMDFSGGNTGSTRLACKNAAEDGIHLPASTPASKYPFDRVQPFSYLQYELEDLSEHQFVAIVDKADSPTKGWVLAEFSDSSDAVIRVRGGLGGLLSAGLKMRLPANRPMLTEIKIPALHSSLLDYKLQIVRHNHDKRQELFAPLLRQSISDPHESKFFVNVDKVDVNLHGVAPFMPPPLREQATLGGVSFQLWTDPSCGSTVDVSLKVDIAGSLGELVMRYRTVFAAFPLLVVALVLRKQFQMYDETGYFITFAEGLDTALRSSFPILLLAMSLLASSLATSAQIPPSDEPFQWPVNATETPIDFTKNDLLLGSQDAFFWFLVPVFGLISVGVCVILNYIALILLSVLSFIYGCLRTRSGYIKRNEKGTPIFSAPTARRRMINTAILLVLVSTLIPYQFAYMVACIVQLATCVRAQWHAKETRSTAHYNFSNYAHSIFILMLWILPINILVLLVWAHNLVVHWFMPFSSHHNVLSIMPFILLVETMTSGAMIPRVTTRLKHVTSMILFAIAVYSAVYGVSYAYLLHHLANILAAWFVVIYFFSSGFSLRRLWLILEGDDATQGKSEPGGSHQKKKP</sequence>
<dbReference type="EC" id="3.1.-.-"/>
<dbReference type="EMBL" id="AAHF01000009">
    <property type="protein sequence ID" value="EAL86917.1"/>
    <property type="molecule type" value="Genomic_DNA"/>
</dbReference>
<dbReference type="RefSeq" id="XP_748955.1">
    <property type="nucleotide sequence ID" value="XM_743862.1"/>
</dbReference>
<dbReference type="SMR" id="Q4WGM4"/>
<dbReference type="FunCoup" id="Q4WGM4">
    <property type="interactions" value="50"/>
</dbReference>
<dbReference type="STRING" id="330879.Q4WGM4"/>
<dbReference type="ESTHER" id="aspfu-q4wgm4">
    <property type="family name" value="PGAP1"/>
</dbReference>
<dbReference type="GlyCosmos" id="Q4WGM4">
    <property type="glycosylation" value="2 sites, No reported glycans"/>
</dbReference>
<dbReference type="EnsemblFungi" id="EAL86917">
    <property type="protein sequence ID" value="EAL86917"/>
    <property type="gene ID" value="AFUA_7G05540"/>
</dbReference>
<dbReference type="GeneID" id="3506265"/>
<dbReference type="KEGG" id="afm:AFUA_7G05540"/>
<dbReference type="VEuPathDB" id="FungiDB:Afu7g05540"/>
<dbReference type="eggNOG" id="KOG3724">
    <property type="taxonomic scope" value="Eukaryota"/>
</dbReference>
<dbReference type="HOGENOM" id="CLU_006103_1_0_1"/>
<dbReference type="InParanoid" id="Q4WGM4"/>
<dbReference type="OMA" id="WVRNLAV"/>
<dbReference type="OrthoDB" id="348976at2759"/>
<dbReference type="Proteomes" id="UP000002530">
    <property type="component" value="Chromosome 7"/>
</dbReference>
<dbReference type="GO" id="GO:0005783">
    <property type="term" value="C:endoplasmic reticulum"/>
    <property type="evidence" value="ECO:0000318"/>
    <property type="project" value="GO_Central"/>
</dbReference>
<dbReference type="GO" id="GO:0005789">
    <property type="term" value="C:endoplasmic reticulum membrane"/>
    <property type="evidence" value="ECO:0007669"/>
    <property type="project" value="UniProtKB-SubCell"/>
</dbReference>
<dbReference type="GO" id="GO:0050185">
    <property type="term" value="F:phosphatidylinositol deacylase activity"/>
    <property type="evidence" value="ECO:0000318"/>
    <property type="project" value="GO_Central"/>
</dbReference>
<dbReference type="GO" id="GO:0006506">
    <property type="term" value="P:GPI anchor biosynthetic process"/>
    <property type="evidence" value="ECO:0000318"/>
    <property type="project" value="GO_Central"/>
</dbReference>
<dbReference type="GO" id="GO:0015031">
    <property type="term" value="P:protein transport"/>
    <property type="evidence" value="ECO:0007669"/>
    <property type="project" value="UniProtKB-KW"/>
</dbReference>
<dbReference type="FunFam" id="3.40.50.1820:FF:000056">
    <property type="entry name" value="GPI inositol-deacylase"/>
    <property type="match status" value="1"/>
</dbReference>
<dbReference type="Gene3D" id="3.40.50.1820">
    <property type="entry name" value="alpha/beta hydrolase"/>
    <property type="match status" value="1"/>
</dbReference>
<dbReference type="InterPro" id="IPR029058">
    <property type="entry name" value="AB_hydrolase_fold"/>
</dbReference>
<dbReference type="InterPro" id="IPR012908">
    <property type="entry name" value="PGAP1-ab_dom-like"/>
</dbReference>
<dbReference type="InterPro" id="IPR039529">
    <property type="entry name" value="PGAP1/BST1"/>
</dbReference>
<dbReference type="InterPro" id="IPR056824">
    <property type="entry name" value="PGAP1_TMD"/>
</dbReference>
<dbReference type="PANTHER" id="PTHR15495:SF7">
    <property type="entry name" value="GPI INOSITOL-DEACYLASE"/>
    <property type="match status" value="1"/>
</dbReference>
<dbReference type="PANTHER" id="PTHR15495">
    <property type="entry name" value="NEGATIVE REGULATOR OF VESICLE FORMATION-RELATED"/>
    <property type="match status" value="1"/>
</dbReference>
<dbReference type="Pfam" id="PF07819">
    <property type="entry name" value="PGAP1"/>
    <property type="match status" value="1"/>
</dbReference>
<dbReference type="Pfam" id="PF25141">
    <property type="entry name" value="PGAP1_2nd"/>
    <property type="match status" value="1"/>
</dbReference>
<dbReference type="Pfam" id="PF25140">
    <property type="entry name" value="PGAP1_TMD"/>
    <property type="match status" value="1"/>
</dbReference>
<dbReference type="SUPFAM" id="SSF53474">
    <property type="entry name" value="alpha/beta-Hydrolases"/>
    <property type="match status" value="1"/>
</dbReference>
<dbReference type="PROSITE" id="PS00120">
    <property type="entry name" value="LIPASE_SER"/>
    <property type="match status" value="1"/>
</dbReference>
<evidence type="ECO:0000250" key="1"/>
<evidence type="ECO:0000255" key="2"/>
<evidence type="ECO:0000256" key="3">
    <source>
        <dbReference type="SAM" id="MobiDB-lite"/>
    </source>
</evidence>
<evidence type="ECO:0000305" key="4"/>
<gene>
    <name type="primary">bst1</name>
    <name type="ORF">AFUA_7G05540</name>
</gene>
<comment type="function">
    <text evidence="1">Involved in inositol deacylation of GPI-anchored proteins which plays important roles in the quality control and ER-associated degradation of GPI-anchored proteins.</text>
</comment>
<comment type="subcellular location">
    <subcellularLocation>
        <location evidence="1">Endoplasmic reticulum membrane</location>
        <topology evidence="1">Multi-pass membrane protein</topology>
    </subcellularLocation>
</comment>
<comment type="similarity">
    <text evidence="4">Belongs to the GPI inositol-deacylase family.</text>
</comment>
<proteinExistence type="inferred from homology"/>
<name>BST1_ASPFU</name>
<feature type="chain" id="PRO_0000277629" description="GPI inositol-deacylase">
    <location>
        <begin position="1"/>
        <end position="1156"/>
    </location>
</feature>
<feature type="transmembrane region" description="Helical" evidence="2">
    <location>
        <begin position="131"/>
        <end position="151"/>
    </location>
</feature>
<feature type="transmembrane region" description="Helical" evidence="2">
    <location>
        <begin position="797"/>
        <end position="817"/>
    </location>
</feature>
<feature type="transmembrane region" description="Helical" evidence="2">
    <location>
        <begin position="845"/>
        <end position="865"/>
    </location>
</feature>
<feature type="transmembrane region" description="Helical" evidence="2">
    <location>
        <begin position="897"/>
        <end position="917"/>
    </location>
</feature>
<feature type="transmembrane region" description="Helical" evidence="2">
    <location>
        <begin position="966"/>
        <end position="986"/>
    </location>
</feature>
<feature type="transmembrane region" description="Helical" evidence="2">
    <location>
        <begin position="1016"/>
        <end position="1036"/>
    </location>
</feature>
<feature type="transmembrane region" description="Helical" evidence="2">
    <location>
        <begin position="1053"/>
        <end position="1073"/>
    </location>
</feature>
<feature type="transmembrane region" description="Helical" evidence="2">
    <location>
        <begin position="1081"/>
        <end position="1101"/>
    </location>
</feature>
<feature type="transmembrane region" description="Helical" evidence="2">
    <location>
        <begin position="1102"/>
        <end position="1122"/>
    </location>
</feature>
<feature type="region of interest" description="Disordered" evidence="3">
    <location>
        <begin position="1"/>
        <end position="95"/>
    </location>
</feature>
<feature type="compositionally biased region" description="Polar residues" evidence="3">
    <location>
        <begin position="20"/>
        <end position="37"/>
    </location>
</feature>
<feature type="compositionally biased region" description="Polar residues" evidence="3">
    <location>
        <begin position="61"/>
        <end position="72"/>
    </location>
</feature>
<feature type="compositionally biased region" description="Low complexity" evidence="3">
    <location>
        <begin position="75"/>
        <end position="95"/>
    </location>
</feature>
<feature type="active site" evidence="1">
    <location>
        <position position="318"/>
    </location>
</feature>
<feature type="glycosylation site" description="N-linked (GlcNAc...) asparagine" evidence="2">
    <location>
        <position position="877"/>
    </location>
</feature>
<feature type="glycosylation site" description="N-linked (GlcNAc...) asparagine" evidence="2">
    <location>
        <position position="1009"/>
    </location>
</feature>
<organism>
    <name type="scientific">Aspergillus fumigatus (strain ATCC MYA-4609 / CBS 101355 / FGSC A1100 / Af293)</name>
    <name type="common">Neosartorya fumigata</name>
    <dbReference type="NCBI Taxonomy" id="330879"/>
    <lineage>
        <taxon>Eukaryota</taxon>
        <taxon>Fungi</taxon>
        <taxon>Dikarya</taxon>
        <taxon>Ascomycota</taxon>
        <taxon>Pezizomycotina</taxon>
        <taxon>Eurotiomycetes</taxon>
        <taxon>Eurotiomycetidae</taxon>
        <taxon>Eurotiales</taxon>
        <taxon>Aspergillaceae</taxon>
        <taxon>Aspergillus</taxon>
        <taxon>Aspergillus subgen. Fumigati</taxon>
    </lineage>
</organism>
<accession>Q4WGM4</accession>
<protein>
    <recommendedName>
        <fullName>GPI inositol-deacylase</fullName>
        <ecNumber>3.1.-.-</ecNumber>
    </recommendedName>
</protein>
<reference key="1">
    <citation type="journal article" date="2005" name="Nature">
        <title>Genomic sequence of the pathogenic and allergenic filamentous fungus Aspergillus fumigatus.</title>
        <authorList>
            <person name="Nierman W.C."/>
            <person name="Pain A."/>
            <person name="Anderson M.J."/>
            <person name="Wortman J.R."/>
            <person name="Kim H.S."/>
            <person name="Arroyo J."/>
            <person name="Berriman M."/>
            <person name="Abe K."/>
            <person name="Archer D.B."/>
            <person name="Bermejo C."/>
            <person name="Bennett J.W."/>
            <person name="Bowyer P."/>
            <person name="Chen D."/>
            <person name="Collins M."/>
            <person name="Coulsen R."/>
            <person name="Davies R."/>
            <person name="Dyer P.S."/>
            <person name="Farman M.L."/>
            <person name="Fedorova N."/>
            <person name="Fedorova N.D."/>
            <person name="Feldblyum T.V."/>
            <person name="Fischer R."/>
            <person name="Fosker N."/>
            <person name="Fraser A."/>
            <person name="Garcia J.L."/>
            <person name="Garcia M.J."/>
            <person name="Goble A."/>
            <person name="Goldman G.H."/>
            <person name="Gomi K."/>
            <person name="Griffith-Jones S."/>
            <person name="Gwilliam R."/>
            <person name="Haas B.J."/>
            <person name="Haas H."/>
            <person name="Harris D.E."/>
            <person name="Horiuchi H."/>
            <person name="Huang J."/>
            <person name="Humphray S."/>
            <person name="Jimenez J."/>
            <person name="Keller N."/>
            <person name="Khouri H."/>
            <person name="Kitamoto K."/>
            <person name="Kobayashi T."/>
            <person name="Konzack S."/>
            <person name="Kulkarni R."/>
            <person name="Kumagai T."/>
            <person name="Lafton A."/>
            <person name="Latge J.-P."/>
            <person name="Li W."/>
            <person name="Lord A."/>
            <person name="Lu C."/>
            <person name="Majoros W.H."/>
            <person name="May G.S."/>
            <person name="Miller B.L."/>
            <person name="Mohamoud Y."/>
            <person name="Molina M."/>
            <person name="Monod M."/>
            <person name="Mouyna I."/>
            <person name="Mulligan S."/>
            <person name="Murphy L.D."/>
            <person name="O'Neil S."/>
            <person name="Paulsen I."/>
            <person name="Penalva M.A."/>
            <person name="Pertea M."/>
            <person name="Price C."/>
            <person name="Pritchard B.L."/>
            <person name="Quail M.A."/>
            <person name="Rabbinowitsch E."/>
            <person name="Rawlins N."/>
            <person name="Rajandream M.A."/>
            <person name="Reichard U."/>
            <person name="Renauld H."/>
            <person name="Robson G.D."/>
            <person name="Rodriguez de Cordoba S."/>
            <person name="Rodriguez-Pena J.M."/>
            <person name="Ronning C.M."/>
            <person name="Rutter S."/>
            <person name="Salzberg S.L."/>
            <person name="Sanchez M."/>
            <person name="Sanchez-Ferrero J.C."/>
            <person name="Saunders D."/>
            <person name="Seeger K."/>
            <person name="Squares R."/>
            <person name="Squares S."/>
            <person name="Takeuchi M."/>
            <person name="Tekaia F."/>
            <person name="Turner G."/>
            <person name="Vazquez de Aldana C.R."/>
            <person name="Weidman J."/>
            <person name="White O."/>
            <person name="Woodward J.R."/>
            <person name="Yu J.-H."/>
            <person name="Fraser C.M."/>
            <person name="Galagan J.E."/>
            <person name="Asai K."/>
            <person name="Machida M."/>
            <person name="Hall N."/>
            <person name="Barrell B.G."/>
            <person name="Denning D.W."/>
        </authorList>
    </citation>
    <scope>NUCLEOTIDE SEQUENCE [LARGE SCALE GENOMIC DNA]</scope>
    <source>
        <strain>ATCC MYA-4609 / CBS 101355 / FGSC A1100 / Af293</strain>
    </source>
</reference>